<reference key="1">
    <citation type="submission" date="2008-06" db="EMBL/GenBank/DDBJ databases">
        <title>Complete sequence of Stenotrophomonas maltophilia R551-3.</title>
        <authorList>
            <consortium name="US DOE Joint Genome Institute"/>
            <person name="Lucas S."/>
            <person name="Copeland A."/>
            <person name="Lapidus A."/>
            <person name="Glavina del Rio T."/>
            <person name="Dalin E."/>
            <person name="Tice H."/>
            <person name="Pitluck S."/>
            <person name="Chain P."/>
            <person name="Malfatti S."/>
            <person name="Shin M."/>
            <person name="Vergez L."/>
            <person name="Lang D."/>
            <person name="Schmutz J."/>
            <person name="Larimer F."/>
            <person name="Land M."/>
            <person name="Hauser L."/>
            <person name="Kyrpides N."/>
            <person name="Mikhailova N."/>
            <person name="Taghavi S."/>
            <person name="Monchy S."/>
            <person name="Newman L."/>
            <person name="Vangronsveld J."/>
            <person name="van der Lelie D."/>
            <person name="Richardson P."/>
        </authorList>
    </citation>
    <scope>NUCLEOTIDE SEQUENCE [LARGE SCALE GENOMIC DNA]</scope>
    <source>
        <strain>R551-3</strain>
    </source>
</reference>
<name>CCME_STRM5</name>
<feature type="chain" id="PRO_1000189054" description="Cytochrome c-type biogenesis protein CcmE">
    <location>
        <begin position="1"/>
        <end position="153"/>
    </location>
</feature>
<feature type="topological domain" description="Cytoplasmic" evidence="1">
    <location>
        <begin position="1"/>
        <end position="8"/>
    </location>
</feature>
<feature type="transmembrane region" description="Helical; Signal-anchor for type II membrane protein" evidence="1">
    <location>
        <begin position="9"/>
        <end position="29"/>
    </location>
</feature>
<feature type="topological domain" description="Periplasmic" evidence="1">
    <location>
        <begin position="30"/>
        <end position="153"/>
    </location>
</feature>
<feature type="binding site" description="covalent" evidence="1">
    <location>
        <position position="123"/>
    </location>
    <ligand>
        <name>heme</name>
        <dbReference type="ChEBI" id="CHEBI:30413"/>
    </ligand>
</feature>
<feature type="binding site" description="axial binding residue" evidence="1">
    <location>
        <position position="127"/>
    </location>
    <ligand>
        <name>heme</name>
        <dbReference type="ChEBI" id="CHEBI:30413"/>
    </ligand>
    <ligandPart>
        <name>Fe</name>
        <dbReference type="ChEBI" id="CHEBI:18248"/>
    </ligandPart>
</feature>
<gene>
    <name evidence="1" type="primary">ccmE</name>
    <name evidence="1" type="synonym">cycJ</name>
    <name type="ordered locus">Smal_2703</name>
</gene>
<evidence type="ECO:0000255" key="1">
    <source>
        <dbReference type="HAMAP-Rule" id="MF_01959"/>
    </source>
</evidence>
<keyword id="KW-0997">Cell inner membrane</keyword>
<keyword id="KW-1003">Cell membrane</keyword>
<keyword id="KW-0201">Cytochrome c-type biogenesis</keyword>
<keyword id="KW-0349">Heme</keyword>
<keyword id="KW-0408">Iron</keyword>
<keyword id="KW-0472">Membrane</keyword>
<keyword id="KW-0479">Metal-binding</keyword>
<keyword id="KW-0735">Signal-anchor</keyword>
<keyword id="KW-0812">Transmembrane</keyword>
<keyword id="KW-1133">Transmembrane helix</keyword>
<proteinExistence type="inferred from homology"/>
<protein>
    <recommendedName>
        <fullName evidence="1">Cytochrome c-type biogenesis protein CcmE</fullName>
    </recommendedName>
    <alternativeName>
        <fullName evidence="1">Cytochrome c maturation protein E</fullName>
    </alternativeName>
    <alternativeName>
        <fullName evidence="1">Heme chaperone CcmE</fullName>
    </alternativeName>
</protein>
<accession>B4SPY3</accession>
<comment type="function">
    <text evidence="1">Heme chaperone required for the biogenesis of c-type cytochromes. Transiently binds heme delivered by CcmC and transfers the heme to apo-cytochromes in a process facilitated by CcmF and CcmH.</text>
</comment>
<comment type="subcellular location">
    <subcellularLocation>
        <location evidence="1">Cell inner membrane</location>
        <topology evidence="1">Single-pass type II membrane protein</topology>
        <orientation evidence="1">Periplasmic side</orientation>
    </subcellularLocation>
</comment>
<comment type="similarity">
    <text evidence="1">Belongs to the CcmE/CycJ family.</text>
</comment>
<organism>
    <name type="scientific">Stenotrophomonas maltophilia (strain R551-3)</name>
    <dbReference type="NCBI Taxonomy" id="391008"/>
    <lineage>
        <taxon>Bacteria</taxon>
        <taxon>Pseudomonadati</taxon>
        <taxon>Pseudomonadota</taxon>
        <taxon>Gammaproteobacteria</taxon>
        <taxon>Lysobacterales</taxon>
        <taxon>Lysobacteraceae</taxon>
        <taxon>Stenotrophomonas</taxon>
        <taxon>Stenotrophomonas maltophilia group</taxon>
    </lineage>
</organism>
<dbReference type="EMBL" id="CP001111">
    <property type="protein sequence ID" value="ACF52403.1"/>
    <property type="molecule type" value="Genomic_DNA"/>
</dbReference>
<dbReference type="RefSeq" id="WP_006378257.1">
    <property type="nucleotide sequence ID" value="NC_011071.1"/>
</dbReference>
<dbReference type="SMR" id="B4SPY3"/>
<dbReference type="STRING" id="391008.Smal_2703"/>
<dbReference type="KEGG" id="smt:Smal_2703"/>
<dbReference type="eggNOG" id="COG2332">
    <property type="taxonomic scope" value="Bacteria"/>
</dbReference>
<dbReference type="HOGENOM" id="CLU_079503_1_1_6"/>
<dbReference type="OrthoDB" id="9793584at2"/>
<dbReference type="Proteomes" id="UP000001867">
    <property type="component" value="Chromosome"/>
</dbReference>
<dbReference type="GO" id="GO:0005886">
    <property type="term" value="C:plasma membrane"/>
    <property type="evidence" value="ECO:0007669"/>
    <property type="project" value="UniProtKB-SubCell"/>
</dbReference>
<dbReference type="GO" id="GO:0020037">
    <property type="term" value="F:heme binding"/>
    <property type="evidence" value="ECO:0007669"/>
    <property type="project" value="InterPro"/>
</dbReference>
<dbReference type="GO" id="GO:0046872">
    <property type="term" value="F:metal ion binding"/>
    <property type="evidence" value="ECO:0007669"/>
    <property type="project" value="UniProtKB-KW"/>
</dbReference>
<dbReference type="GO" id="GO:0017004">
    <property type="term" value="P:cytochrome complex assembly"/>
    <property type="evidence" value="ECO:0007669"/>
    <property type="project" value="UniProtKB-KW"/>
</dbReference>
<dbReference type="Gene3D" id="2.40.50.140">
    <property type="entry name" value="Nucleic acid-binding proteins"/>
    <property type="match status" value="1"/>
</dbReference>
<dbReference type="HAMAP" id="MF_01959">
    <property type="entry name" value="CcmE"/>
    <property type="match status" value="1"/>
</dbReference>
<dbReference type="InterPro" id="IPR004329">
    <property type="entry name" value="CcmE"/>
</dbReference>
<dbReference type="InterPro" id="IPR036127">
    <property type="entry name" value="CcmE-like_sf"/>
</dbReference>
<dbReference type="InterPro" id="IPR012340">
    <property type="entry name" value="NA-bd_OB-fold"/>
</dbReference>
<dbReference type="NCBIfam" id="NF009727">
    <property type="entry name" value="PRK13254.1-1"/>
    <property type="match status" value="1"/>
</dbReference>
<dbReference type="NCBIfam" id="NF009728">
    <property type="entry name" value="PRK13254.1-2"/>
    <property type="match status" value="1"/>
</dbReference>
<dbReference type="PANTHER" id="PTHR34128">
    <property type="entry name" value="CYTOCHROME C-TYPE BIOGENESIS PROTEIN CCME HOMOLOG, MITOCHONDRIAL"/>
    <property type="match status" value="1"/>
</dbReference>
<dbReference type="PANTHER" id="PTHR34128:SF2">
    <property type="entry name" value="CYTOCHROME C-TYPE BIOGENESIS PROTEIN CCME HOMOLOG, MITOCHONDRIAL"/>
    <property type="match status" value="1"/>
</dbReference>
<dbReference type="Pfam" id="PF03100">
    <property type="entry name" value="CcmE"/>
    <property type="match status" value="1"/>
</dbReference>
<dbReference type="SUPFAM" id="SSF82093">
    <property type="entry name" value="Heme chaperone CcmE"/>
    <property type="match status" value="1"/>
</dbReference>
<sequence length="153" mass="16674">MTPVQRRRLVWVLLALLASGLATALVAMALERNIAYLYTPSEVLRGDVDAQSRFRLGGMVVKGSFNRPVGSLEARFEVTDGDAQLAVTTSRILPDMFAEGTAVVASGRLQDGIFVADEVLAKHDEKYVPKEVADKMGDAHRKHDVPVTAPEVR</sequence>